<accession>B1HWE9</accession>
<name>SSRP_LYSSC</name>
<keyword id="KW-0963">Cytoplasm</keyword>
<keyword id="KW-0694">RNA-binding</keyword>
<comment type="function">
    <text evidence="1">Required for rescue of stalled ribosomes mediated by trans-translation. Binds to transfer-messenger RNA (tmRNA), required for stable association of tmRNA with ribosomes. tmRNA and SmpB together mimic tRNA shape, replacing the anticodon stem-loop with SmpB. tmRNA is encoded by the ssrA gene; the 2 termini fold to resemble tRNA(Ala) and it encodes a 'tag peptide', a short internal open reading frame. During trans-translation Ala-aminoacylated tmRNA acts like a tRNA, entering the A-site of stalled ribosomes, displacing the stalled mRNA. The ribosome then switches to translate the ORF on the tmRNA; the nascent peptide is terminated with the 'tag peptide' encoded by the tmRNA and targeted for degradation. The ribosome is freed to recommence translation, which seems to be the essential function of trans-translation.</text>
</comment>
<comment type="subcellular location">
    <subcellularLocation>
        <location evidence="1">Cytoplasm</location>
    </subcellularLocation>
    <text evidence="1">The tmRNA-SmpB complex associates with stalled 70S ribosomes.</text>
</comment>
<comment type="similarity">
    <text evidence="1">Belongs to the SmpB family.</text>
</comment>
<dbReference type="EMBL" id="CP000817">
    <property type="protein sequence ID" value="ACA38106.1"/>
    <property type="molecule type" value="Genomic_DNA"/>
</dbReference>
<dbReference type="RefSeq" id="WP_012292260.1">
    <property type="nucleotide sequence ID" value="NC_010382.1"/>
</dbReference>
<dbReference type="SMR" id="B1HWE9"/>
<dbReference type="EnsemblBacteria" id="ACA38106">
    <property type="protein sequence ID" value="ACA38106"/>
    <property type="gene ID" value="Bsph_0481"/>
</dbReference>
<dbReference type="KEGG" id="lsp:Bsph_0481"/>
<dbReference type="HOGENOM" id="CLU_108953_0_0_9"/>
<dbReference type="Proteomes" id="UP000002164">
    <property type="component" value="Chromosome"/>
</dbReference>
<dbReference type="GO" id="GO:0005829">
    <property type="term" value="C:cytosol"/>
    <property type="evidence" value="ECO:0007669"/>
    <property type="project" value="TreeGrafter"/>
</dbReference>
<dbReference type="GO" id="GO:0003723">
    <property type="term" value="F:RNA binding"/>
    <property type="evidence" value="ECO:0007669"/>
    <property type="project" value="UniProtKB-UniRule"/>
</dbReference>
<dbReference type="GO" id="GO:0070929">
    <property type="term" value="P:trans-translation"/>
    <property type="evidence" value="ECO:0007669"/>
    <property type="project" value="UniProtKB-UniRule"/>
</dbReference>
<dbReference type="CDD" id="cd09294">
    <property type="entry name" value="SmpB"/>
    <property type="match status" value="1"/>
</dbReference>
<dbReference type="Gene3D" id="2.40.280.10">
    <property type="match status" value="1"/>
</dbReference>
<dbReference type="HAMAP" id="MF_00023">
    <property type="entry name" value="SmpB"/>
    <property type="match status" value="1"/>
</dbReference>
<dbReference type="InterPro" id="IPR023620">
    <property type="entry name" value="SmpB"/>
</dbReference>
<dbReference type="InterPro" id="IPR000037">
    <property type="entry name" value="SsrA-bd_prot"/>
</dbReference>
<dbReference type="InterPro" id="IPR020081">
    <property type="entry name" value="SsrA-bd_prot_CS"/>
</dbReference>
<dbReference type="NCBIfam" id="NF003843">
    <property type="entry name" value="PRK05422.1"/>
    <property type="match status" value="1"/>
</dbReference>
<dbReference type="NCBIfam" id="TIGR00086">
    <property type="entry name" value="smpB"/>
    <property type="match status" value="1"/>
</dbReference>
<dbReference type="PANTHER" id="PTHR30308:SF2">
    <property type="entry name" value="SSRA-BINDING PROTEIN"/>
    <property type="match status" value="1"/>
</dbReference>
<dbReference type="PANTHER" id="PTHR30308">
    <property type="entry name" value="TMRNA-BINDING COMPONENT OF TRANS-TRANSLATION TAGGING COMPLEX"/>
    <property type="match status" value="1"/>
</dbReference>
<dbReference type="Pfam" id="PF01668">
    <property type="entry name" value="SmpB"/>
    <property type="match status" value="1"/>
</dbReference>
<dbReference type="SUPFAM" id="SSF74982">
    <property type="entry name" value="Small protein B (SmpB)"/>
    <property type="match status" value="1"/>
</dbReference>
<dbReference type="PROSITE" id="PS01317">
    <property type="entry name" value="SSRP"/>
    <property type="match status" value="1"/>
</dbReference>
<protein>
    <recommendedName>
        <fullName evidence="1">SsrA-binding protein</fullName>
    </recommendedName>
    <alternativeName>
        <fullName evidence="1">Small protein B</fullName>
    </alternativeName>
</protein>
<sequence length="155" mass="17631">MAKGSGKVLAQNKKAGHDYFIEDTIEAGMVLTGTEIKSIRAGKAQLKDSYVRITNGEAWISNMHVSPFDQGNRFNHDPLRARKLLLHKKQIGELVGAVKRDGYTIVPLKMYIKDGYAKLLIGVGKGKKDYDKRNDMRKKEAKREMERTFKSKNQY</sequence>
<evidence type="ECO:0000255" key="1">
    <source>
        <dbReference type="HAMAP-Rule" id="MF_00023"/>
    </source>
</evidence>
<evidence type="ECO:0000256" key="2">
    <source>
        <dbReference type="SAM" id="MobiDB-lite"/>
    </source>
</evidence>
<feature type="chain" id="PRO_1000090161" description="SsrA-binding protein">
    <location>
        <begin position="1"/>
        <end position="155"/>
    </location>
</feature>
<feature type="region of interest" description="Disordered" evidence="2">
    <location>
        <begin position="127"/>
        <end position="155"/>
    </location>
</feature>
<feature type="compositionally biased region" description="Basic and acidic residues" evidence="2">
    <location>
        <begin position="127"/>
        <end position="149"/>
    </location>
</feature>
<reference key="1">
    <citation type="journal article" date="2008" name="J. Bacteriol.">
        <title>Complete genome sequence of the mosquitocidal bacterium Bacillus sphaericus C3-41 and comparison with those of closely related Bacillus species.</title>
        <authorList>
            <person name="Hu X."/>
            <person name="Fan W."/>
            <person name="Han B."/>
            <person name="Liu H."/>
            <person name="Zheng D."/>
            <person name="Li Q."/>
            <person name="Dong W."/>
            <person name="Yan J."/>
            <person name="Gao M."/>
            <person name="Berry C."/>
            <person name="Yuan Z."/>
        </authorList>
    </citation>
    <scope>NUCLEOTIDE SEQUENCE [LARGE SCALE GENOMIC DNA]</scope>
    <source>
        <strain>C3-41</strain>
    </source>
</reference>
<gene>
    <name evidence="1" type="primary">smpB</name>
    <name type="ordered locus">Bsph_0481</name>
</gene>
<organism>
    <name type="scientific">Lysinibacillus sphaericus (strain C3-41)</name>
    <dbReference type="NCBI Taxonomy" id="444177"/>
    <lineage>
        <taxon>Bacteria</taxon>
        <taxon>Bacillati</taxon>
        <taxon>Bacillota</taxon>
        <taxon>Bacilli</taxon>
        <taxon>Bacillales</taxon>
        <taxon>Bacillaceae</taxon>
        <taxon>Lysinibacillus</taxon>
    </lineage>
</organism>
<proteinExistence type="inferred from homology"/>